<gene>
    <name evidence="1" type="primary">rihA</name>
    <name type="ordered locus">SeSA_A0814</name>
</gene>
<sequence length="311" mass="33745">MALPIIIDCDPGHDDAIALVLALASPELEVKAITSSAGNQTPDKTLRNVLRMLTLLKRPDIPVAGGAVKPLMRELIIADNVHGESGLDGPALPEPSFAPQSGTAVELMAKTLRESSQPVTIVSTGPQTNVALLLNSHPELHTKIARIVIMGGAMGLGNWTPAAEFNIYVDPEAAEIVFQSGIPVVMAGLDVTHKAQIHAADIERFRAIGNPISTIVAELLDFFMEYHKDEKWGFVGAPLHDPCTIAWLLKPEIFTTVERWVGVETQGKYTQGMTVVDYYFLTGNKPNATVMVDVDRQGFVDLLAERLKFYA</sequence>
<evidence type="ECO:0000255" key="1">
    <source>
        <dbReference type="HAMAP-Rule" id="MF_01431"/>
    </source>
</evidence>
<comment type="function">
    <text evidence="1">Hydrolyzes cytidine or uridine to ribose and cytosine or uracil, respectively.</text>
</comment>
<comment type="similarity">
    <text evidence="1">Belongs to the IUNH family. RihA subfamily.</text>
</comment>
<organism>
    <name type="scientific">Salmonella schwarzengrund (strain CVM19633)</name>
    <dbReference type="NCBI Taxonomy" id="439843"/>
    <lineage>
        <taxon>Bacteria</taxon>
        <taxon>Pseudomonadati</taxon>
        <taxon>Pseudomonadota</taxon>
        <taxon>Gammaproteobacteria</taxon>
        <taxon>Enterobacterales</taxon>
        <taxon>Enterobacteriaceae</taxon>
        <taxon>Salmonella</taxon>
    </lineage>
</organism>
<protein>
    <recommendedName>
        <fullName evidence="1">Pyrimidine-specific ribonucleoside hydrolase RihA</fullName>
        <ecNumber evidence="1">3.2.-.-</ecNumber>
    </recommendedName>
    <alternativeName>
        <fullName evidence="1">Cytidine/uridine-specific hydrolase</fullName>
    </alternativeName>
</protein>
<reference key="1">
    <citation type="journal article" date="2011" name="J. Bacteriol.">
        <title>Comparative genomics of 28 Salmonella enterica isolates: evidence for CRISPR-mediated adaptive sublineage evolution.</title>
        <authorList>
            <person name="Fricke W.F."/>
            <person name="Mammel M.K."/>
            <person name="McDermott P.F."/>
            <person name="Tartera C."/>
            <person name="White D.G."/>
            <person name="Leclerc J.E."/>
            <person name="Ravel J."/>
            <person name="Cebula T.A."/>
        </authorList>
    </citation>
    <scope>NUCLEOTIDE SEQUENCE [LARGE SCALE GENOMIC DNA]</scope>
    <source>
        <strain>CVM19633</strain>
    </source>
</reference>
<dbReference type="EC" id="3.2.-.-" evidence="1"/>
<dbReference type="EMBL" id="CP001127">
    <property type="protein sequence ID" value="ACF90229.1"/>
    <property type="molecule type" value="Genomic_DNA"/>
</dbReference>
<dbReference type="RefSeq" id="WP_001207417.1">
    <property type="nucleotide sequence ID" value="NC_011094.1"/>
</dbReference>
<dbReference type="SMR" id="B4TPY1"/>
<dbReference type="KEGG" id="sew:SeSA_A0814"/>
<dbReference type="HOGENOM" id="CLU_036838_2_0_6"/>
<dbReference type="Proteomes" id="UP000001865">
    <property type="component" value="Chromosome"/>
</dbReference>
<dbReference type="GO" id="GO:0005829">
    <property type="term" value="C:cytosol"/>
    <property type="evidence" value="ECO:0007669"/>
    <property type="project" value="TreeGrafter"/>
</dbReference>
<dbReference type="GO" id="GO:0008477">
    <property type="term" value="F:purine nucleosidase activity"/>
    <property type="evidence" value="ECO:0007669"/>
    <property type="project" value="TreeGrafter"/>
</dbReference>
<dbReference type="GO" id="GO:0045437">
    <property type="term" value="F:uridine nucleosidase activity"/>
    <property type="evidence" value="ECO:0007669"/>
    <property type="project" value="InterPro"/>
</dbReference>
<dbReference type="GO" id="GO:0015949">
    <property type="term" value="P:nucleobase-containing small molecule interconversion"/>
    <property type="evidence" value="ECO:0007669"/>
    <property type="project" value="InterPro"/>
</dbReference>
<dbReference type="GO" id="GO:0006152">
    <property type="term" value="P:purine nucleoside catabolic process"/>
    <property type="evidence" value="ECO:0007669"/>
    <property type="project" value="TreeGrafter"/>
</dbReference>
<dbReference type="GO" id="GO:0006206">
    <property type="term" value="P:pyrimidine nucleobase metabolic process"/>
    <property type="evidence" value="ECO:0007669"/>
    <property type="project" value="UniProtKB-UniRule"/>
</dbReference>
<dbReference type="CDD" id="cd02651">
    <property type="entry name" value="nuc_hydro_IU_UC_XIUA"/>
    <property type="match status" value="1"/>
</dbReference>
<dbReference type="FunFam" id="3.90.245.10:FF:000001">
    <property type="entry name" value="Pyrimidine-specific ribonucleoside hydrolase RihA"/>
    <property type="match status" value="1"/>
</dbReference>
<dbReference type="Gene3D" id="3.90.245.10">
    <property type="entry name" value="Ribonucleoside hydrolase-like"/>
    <property type="match status" value="1"/>
</dbReference>
<dbReference type="HAMAP" id="MF_01431">
    <property type="entry name" value="Pyrim_hydro_RihA"/>
    <property type="match status" value="1"/>
</dbReference>
<dbReference type="InterPro" id="IPR015910">
    <property type="entry name" value="I/U_nuclsd_hydro_CS"/>
</dbReference>
<dbReference type="InterPro" id="IPR001910">
    <property type="entry name" value="Inosine/uridine_hydrolase_dom"/>
</dbReference>
<dbReference type="InterPro" id="IPR023186">
    <property type="entry name" value="IUNH"/>
</dbReference>
<dbReference type="InterPro" id="IPR022975">
    <property type="entry name" value="Pyrim_hydro_RihA"/>
</dbReference>
<dbReference type="InterPro" id="IPR036452">
    <property type="entry name" value="Ribo_hydro-like"/>
</dbReference>
<dbReference type="NCBIfam" id="NF007761">
    <property type="entry name" value="PRK10443.1"/>
    <property type="match status" value="1"/>
</dbReference>
<dbReference type="PANTHER" id="PTHR12304">
    <property type="entry name" value="INOSINE-URIDINE PREFERRING NUCLEOSIDE HYDROLASE"/>
    <property type="match status" value="1"/>
</dbReference>
<dbReference type="PANTHER" id="PTHR12304:SF4">
    <property type="entry name" value="URIDINE NUCLEOSIDASE"/>
    <property type="match status" value="1"/>
</dbReference>
<dbReference type="Pfam" id="PF01156">
    <property type="entry name" value="IU_nuc_hydro"/>
    <property type="match status" value="1"/>
</dbReference>
<dbReference type="SUPFAM" id="SSF53590">
    <property type="entry name" value="Nucleoside hydrolase"/>
    <property type="match status" value="1"/>
</dbReference>
<dbReference type="PROSITE" id="PS01247">
    <property type="entry name" value="IUNH"/>
    <property type="match status" value="1"/>
</dbReference>
<accession>B4TPY1</accession>
<keyword id="KW-0326">Glycosidase</keyword>
<keyword id="KW-0378">Hydrolase</keyword>
<proteinExistence type="inferred from homology"/>
<feature type="chain" id="PRO_1000145805" description="Pyrimidine-specific ribonucleoside hydrolase RihA">
    <location>
        <begin position="1"/>
        <end position="311"/>
    </location>
</feature>
<feature type="active site" evidence="1">
    <location>
        <position position="240"/>
    </location>
</feature>
<name>RIHA_SALSV</name>